<feature type="signal peptide" evidence="4">
    <location>
        <begin position="1"/>
        <end position="17"/>
    </location>
</feature>
<feature type="chain" id="PRO_0000038218" description="Envelope glycoprotein D">
    <location>
        <begin position="18"/>
        <end position="395"/>
    </location>
</feature>
<feature type="topological domain" description="Virion surface" evidence="4">
    <location>
        <begin position="18"/>
        <end position="342"/>
    </location>
</feature>
<feature type="transmembrane region" description="Helical" evidence="4">
    <location>
        <begin position="343"/>
        <end position="362"/>
    </location>
</feature>
<feature type="topological domain" description="Intravirion" evidence="4">
    <location>
        <begin position="363"/>
        <end position="395"/>
    </location>
</feature>
<feature type="region of interest" description="Profusion" evidence="2">
    <location>
        <begin position="261"/>
        <end position="306"/>
    </location>
</feature>
<feature type="region of interest" description="Disordered" evidence="5">
    <location>
        <begin position="289"/>
        <end position="314"/>
    </location>
</feature>
<feature type="binding site" evidence="1">
    <location>
        <position position="63"/>
    </location>
    <ligand>
        <name>Zn(2+)</name>
        <dbReference type="ChEBI" id="CHEBI:29105"/>
        <note>ligand shared between dimeric partners</note>
    </ligand>
</feature>
<feature type="binding site" evidence="1">
    <location>
        <position position="240"/>
    </location>
    <ligand>
        <name>Zn(2+)</name>
        <dbReference type="ChEBI" id="CHEBI:29105"/>
        <note>ligand shared between dimeric partners</note>
    </ligand>
</feature>
<feature type="glycosylation site" description="N-linked (GlcNAc...) asparagine; by host" evidence="4">
    <location>
        <position position="119"/>
    </location>
</feature>
<feature type="glycosylation site" description="N-linked (GlcNAc...) asparagine; by host" evidence="4">
    <location>
        <position position="287"/>
    </location>
</feature>
<feature type="disulfide bond" evidence="1">
    <location>
        <begin position="90"/>
        <end position="214"/>
    </location>
</feature>
<feature type="disulfide bond" evidence="1">
    <location>
        <begin position="131"/>
        <end position="227"/>
    </location>
</feature>
<feature type="disulfide bond" evidence="1">
    <location>
        <begin position="143"/>
        <end position="152"/>
    </location>
</feature>
<protein>
    <recommendedName>
        <fullName>Envelope glycoprotein D</fullName>
        <shortName>gD</shortName>
    </recommendedName>
</protein>
<keyword id="KW-1015">Disulfide bond</keyword>
<keyword id="KW-0325">Glycoprotein</keyword>
<keyword id="KW-0945">Host-virus interaction</keyword>
<keyword id="KW-0472">Membrane</keyword>
<keyword id="KW-0479">Metal-binding</keyword>
<keyword id="KW-0732">Signal</keyword>
<keyword id="KW-0812">Transmembrane</keyword>
<keyword id="KW-1133">Transmembrane helix</keyword>
<keyword id="KW-1161">Viral attachment to host cell</keyword>
<keyword id="KW-1234">Viral attachment to host entry receptor</keyword>
<keyword id="KW-0261">Viral envelope protein</keyword>
<keyword id="KW-0946">Virion</keyword>
<keyword id="KW-1160">Virus entry into host cell</keyword>
<keyword id="KW-0862">Zinc</keyword>
<comment type="function">
    <text evidence="2">Envelope glycoprotein that binds to host cell entry receptors, promoting the virus entry into host cells. May trigger fusion with host membrane, by recruiting the fusion machinery composed of gB and gH/gL (By similarity).</text>
</comment>
<comment type="subcellular location">
    <subcellularLocation>
        <location evidence="2">Virion membrane</location>
        <topology evidence="2">Single-pass type I membrane protein</topology>
    </subcellularLocation>
    <text evidence="3">During virion morphogenesis, this protein probably accumulates in the endosomes and trans-Golgi where secondary envelopment occurs.</text>
</comment>
<comment type="similarity">
    <text evidence="6">Belongs to the herpesviridae glycoprotein D family.</text>
</comment>
<gene>
    <name type="primary">gD</name>
</gene>
<organism>
    <name type="scientific">Cercopithecine herpesvirus 1</name>
    <name type="common">CeHV-1</name>
    <name type="synonym">Simian herpes B virus</name>
    <dbReference type="NCBI Taxonomy" id="10325"/>
    <lineage>
        <taxon>Viruses</taxon>
        <taxon>Duplodnaviria</taxon>
        <taxon>Heunggongvirae</taxon>
        <taxon>Peploviricota</taxon>
        <taxon>Herviviricetes</taxon>
        <taxon>Herpesvirales</taxon>
        <taxon>Orthoherpesviridae</taxon>
        <taxon>Alphaherpesvirinae</taxon>
        <taxon>Simplexvirus</taxon>
        <taxon>Simplexvirus macacinealpha1</taxon>
    </lineage>
</organism>
<evidence type="ECO:0000250" key="1">
    <source>
        <dbReference type="UniProtKB" id="P57083"/>
    </source>
</evidence>
<evidence type="ECO:0000250" key="2">
    <source>
        <dbReference type="UniProtKB" id="Q05059"/>
    </source>
</evidence>
<evidence type="ECO:0000250" key="3">
    <source>
        <dbReference type="UniProtKB" id="Q69091"/>
    </source>
</evidence>
<evidence type="ECO:0000255" key="4"/>
<evidence type="ECO:0000256" key="5">
    <source>
        <dbReference type="SAM" id="MobiDB-lite"/>
    </source>
</evidence>
<evidence type="ECO:0000305" key="6"/>
<organismHost>
    <name type="scientific">Homo sapiens</name>
    <name type="common">Human</name>
    <dbReference type="NCBI Taxonomy" id="9606"/>
</organismHost>
<organismHost>
    <name type="scientific">Macaca fascicularis</name>
    <name type="common">Crab-eating macaque</name>
    <name type="synonym">Cynomolgus monkey</name>
    <dbReference type="NCBI Taxonomy" id="9541"/>
</organismHost>
<organismHost>
    <name type="scientific">Macaca leonina</name>
    <name type="common">Northern pig-tailed macaque</name>
    <name type="synonym">Macaca nemestrina leonina</name>
    <dbReference type="NCBI Taxonomy" id="90387"/>
</organismHost>
<organismHost>
    <name type="scientific">Macaca mulatta</name>
    <name type="common">Rhesus macaque</name>
    <dbReference type="NCBI Taxonomy" id="9544"/>
</organismHost>
<organismHost>
    <name type="scientific">Macaca nemestrina</name>
    <name type="common">Pig-tailed macaque</name>
    <dbReference type="NCBI Taxonomy" id="9545"/>
</organismHost>
<sequence length="395" mass="42643">MGSGIAAVLLSLAVALARVPAGEGEYVPVERSLTRVNPGRFRGAHLPPLEQKTDPPDVRRVYHVQPFVENPFQTPSVPVAVYYAVLERACRSVLLWAPTEAVQVVRGAPEATRSDARYNLTVAWYRTSDDCAIPILVMEYAECQYDKPLGACPVRNLPRWSFYDSFSATGDDDLGLLMHAPAFETAGTYVRLVKVNGWVEVTQFIFEHRGKGPCRYTLPLRILPAACLRAPVFEQGVTVDAIGMLPRFIPENQRIVAVYSLQAAGWHGPKAPFTSTLLPPEVVETANVTRPELAPEERGTSRTPGDEPAPAVAAQLPPNWHVPEASDVTIQGPAPAPSGHTGAVVGALAGAGLAAGVVVLAVYLVRRRGRAAGKHVRLPELLEEAHGPARRGAPY</sequence>
<reference key="1">
    <citation type="journal article" date="1992" name="J. Gen. Virol.">
        <title>Nucleotide sequence analysis of genes encoding glycoproteins D and J in simian herpes B virus.</title>
        <authorList>
            <person name="Bennett A.M."/>
            <person name="Harrington L."/>
            <person name="Kelly D.C."/>
        </authorList>
    </citation>
    <scope>NUCLEOTIDE SEQUENCE [GENOMIC DNA]</scope>
</reference>
<dbReference type="EMBL" id="S48101">
    <property type="protein sequence ID" value="AAB24129.1"/>
    <property type="molecule type" value="Genomic_DNA"/>
</dbReference>
<dbReference type="PIR" id="JQ1746">
    <property type="entry name" value="JQ1746"/>
</dbReference>
<dbReference type="SMR" id="P36342"/>
<dbReference type="GlyCosmos" id="P36342">
    <property type="glycosylation" value="2 sites, No reported glycans"/>
</dbReference>
<dbReference type="GO" id="GO:0016020">
    <property type="term" value="C:membrane"/>
    <property type="evidence" value="ECO:0007669"/>
    <property type="project" value="UniProtKB-KW"/>
</dbReference>
<dbReference type="GO" id="GO:0019031">
    <property type="term" value="C:viral envelope"/>
    <property type="evidence" value="ECO:0007669"/>
    <property type="project" value="UniProtKB-KW"/>
</dbReference>
<dbReference type="GO" id="GO:0055036">
    <property type="term" value="C:virion membrane"/>
    <property type="evidence" value="ECO:0007669"/>
    <property type="project" value="UniProtKB-SubCell"/>
</dbReference>
<dbReference type="GO" id="GO:0046872">
    <property type="term" value="F:metal ion binding"/>
    <property type="evidence" value="ECO:0007669"/>
    <property type="project" value="UniProtKB-KW"/>
</dbReference>
<dbReference type="GO" id="GO:0098670">
    <property type="term" value="P:entry receptor-mediated virion attachment to host cell"/>
    <property type="evidence" value="ECO:0007669"/>
    <property type="project" value="UniProtKB-KW"/>
</dbReference>
<dbReference type="GO" id="GO:0046718">
    <property type="term" value="P:symbiont entry into host cell"/>
    <property type="evidence" value="ECO:0007669"/>
    <property type="project" value="UniProtKB-KW"/>
</dbReference>
<dbReference type="Gene3D" id="2.70.230.10">
    <property type="match status" value="1"/>
</dbReference>
<dbReference type="InterPro" id="IPR002896">
    <property type="entry name" value="Herpes_glycop_dom"/>
</dbReference>
<dbReference type="InterPro" id="IPR036179">
    <property type="entry name" value="Ig-like_dom_sf"/>
</dbReference>
<dbReference type="Pfam" id="PF01537">
    <property type="entry name" value="Herpes_glycop_D"/>
    <property type="match status" value="1"/>
</dbReference>
<dbReference type="SUPFAM" id="SSF48726">
    <property type="entry name" value="Immunoglobulin"/>
    <property type="match status" value="1"/>
</dbReference>
<name>GD_CHV1</name>
<proteinExistence type="inferred from homology"/>
<accession>P36342</accession>